<feature type="signal peptide" evidence="2">
    <location>
        <begin position="1"/>
        <end position="30"/>
    </location>
</feature>
<feature type="chain" id="PRO_0000420526" description="Leucine-rich repeat transmembrane neuronal protein 4">
    <location>
        <begin position="31"/>
        <end position="590"/>
    </location>
</feature>
<feature type="topological domain" description="Extracellular" evidence="2">
    <location>
        <begin position="31"/>
        <end position="424"/>
    </location>
</feature>
<feature type="transmembrane region" description="Helical" evidence="2">
    <location>
        <begin position="425"/>
        <end position="445"/>
    </location>
</feature>
<feature type="topological domain" description="Cytoplasmic" evidence="2">
    <location>
        <begin position="446"/>
        <end position="590"/>
    </location>
</feature>
<feature type="domain" description="LRRNT">
    <location>
        <begin position="31"/>
        <end position="59"/>
    </location>
</feature>
<feature type="repeat" description="LRR 1">
    <location>
        <begin position="60"/>
        <end position="83"/>
    </location>
</feature>
<feature type="repeat" description="LRR 2">
    <location>
        <begin position="84"/>
        <end position="107"/>
    </location>
</feature>
<feature type="repeat" description="LRR 3">
    <location>
        <begin position="108"/>
        <end position="131"/>
    </location>
</feature>
<feature type="repeat" description="LRR 4">
    <location>
        <begin position="132"/>
        <end position="155"/>
    </location>
</feature>
<feature type="repeat" description="LRR 5">
    <location>
        <begin position="157"/>
        <end position="179"/>
    </location>
</feature>
<feature type="repeat" description="LRR 6">
    <location>
        <begin position="180"/>
        <end position="203"/>
    </location>
</feature>
<feature type="repeat" description="LRR 7">
    <location>
        <begin position="205"/>
        <end position="227"/>
    </location>
</feature>
<feature type="repeat" description="LRR 8">
    <location>
        <begin position="228"/>
        <end position="251"/>
    </location>
</feature>
<feature type="repeat" description="LRR 9">
    <location>
        <begin position="252"/>
        <end position="275"/>
    </location>
</feature>
<feature type="repeat" description="LRR 10">
    <location>
        <begin position="276"/>
        <end position="299"/>
    </location>
</feature>
<feature type="domain" description="LRRCT">
    <location>
        <begin position="311"/>
        <end position="362"/>
    </location>
</feature>
<feature type="glycosylation site" description="N-linked (GlcNAc...) asparagine" evidence="2">
    <location>
        <position position="58"/>
    </location>
</feature>
<feature type="glycosylation site" description="N-linked (GlcNAc...) asparagine" evidence="2">
    <location>
        <position position="126"/>
    </location>
</feature>
<feature type="glycosylation site" description="N-linked (GlcNAc...) asparagine" evidence="2">
    <location>
        <position position="291"/>
    </location>
</feature>
<protein>
    <recommendedName>
        <fullName>Leucine-rich repeat transmembrane neuronal protein 4</fullName>
    </recommendedName>
</protein>
<dbReference type="EMBL" id="BC168219">
    <property type="protein sequence ID" value="AAI68219.1"/>
    <property type="molecule type" value="mRNA"/>
</dbReference>
<dbReference type="RefSeq" id="NP_001128218.1">
    <property type="nucleotide sequence ID" value="NM_001134746.1"/>
</dbReference>
<dbReference type="RefSeq" id="XP_008761247.2">
    <property type="nucleotide sequence ID" value="XM_008763025.4"/>
</dbReference>
<dbReference type="RefSeq" id="XP_008761248.2">
    <property type="nucleotide sequence ID" value="XM_008763026.4"/>
</dbReference>
<dbReference type="SMR" id="B4F7C5"/>
<dbReference type="BioGRID" id="271527">
    <property type="interactions" value="2"/>
</dbReference>
<dbReference type="CORUM" id="B4F7C5"/>
<dbReference type="FunCoup" id="B4F7C5">
    <property type="interactions" value="225"/>
</dbReference>
<dbReference type="STRING" id="10116.ENSRNOP00000075837"/>
<dbReference type="GlyCosmos" id="B4F7C5">
    <property type="glycosylation" value="3 sites, No reported glycans"/>
</dbReference>
<dbReference type="GlyGen" id="B4F7C5">
    <property type="glycosylation" value="3 sites"/>
</dbReference>
<dbReference type="iPTMnet" id="B4F7C5"/>
<dbReference type="PhosphoSitePlus" id="B4F7C5"/>
<dbReference type="PaxDb" id="10116-ENSRNOP00000034217"/>
<dbReference type="ABCD" id="B4F7C5">
    <property type="antibodies" value="1 sequenced antibody"/>
</dbReference>
<dbReference type="Ensembl" id="ENSRNOT00000092261.2">
    <property type="protein sequence ID" value="ENSRNOP00000075874.2"/>
    <property type="gene ID" value="ENSRNOG00000021938.8"/>
</dbReference>
<dbReference type="GeneID" id="500219"/>
<dbReference type="KEGG" id="rno:500219"/>
<dbReference type="AGR" id="RGD:1560707"/>
<dbReference type="CTD" id="80059"/>
<dbReference type="RGD" id="1560707">
    <property type="gene designation" value="Lrrtm4"/>
</dbReference>
<dbReference type="eggNOG" id="KOG0619">
    <property type="taxonomic scope" value="Eukaryota"/>
</dbReference>
<dbReference type="GeneTree" id="ENSGT00940000154909"/>
<dbReference type="InParanoid" id="B4F7C5"/>
<dbReference type="OMA" id="LWYCNPN"/>
<dbReference type="PhylomeDB" id="B4F7C5"/>
<dbReference type="Reactome" id="R-RNO-6794361">
    <property type="pathway name" value="Neurexins and neuroligins"/>
</dbReference>
<dbReference type="PRO" id="PR:B4F7C5"/>
<dbReference type="Proteomes" id="UP000002494">
    <property type="component" value="Chromosome 4"/>
</dbReference>
<dbReference type="Bgee" id="ENSRNOG00000021938">
    <property type="expression patterns" value="Expressed in frontal cortex and 5 other cell types or tissues"/>
</dbReference>
<dbReference type="ExpressionAtlas" id="B4F7C5">
    <property type="expression patterns" value="baseline and differential"/>
</dbReference>
<dbReference type="GO" id="GO:0032281">
    <property type="term" value="C:AMPA glutamate receptor complex"/>
    <property type="evidence" value="ECO:0000266"/>
    <property type="project" value="RGD"/>
</dbReference>
<dbReference type="GO" id="GO:0031012">
    <property type="term" value="C:extracellular matrix"/>
    <property type="evidence" value="ECO:0000318"/>
    <property type="project" value="GO_Central"/>
</dbReference>
<dbReference type="GO" id="GO:0005615">
    <property type="term" value="C:extracellular space"/>
    <property type="evidence" value="ECO:0000318"/>
    <property type="project" value="GO_Central"/>
</dbReference>
<dbReference type="GO" id="GO:0098982">
    <property type="term" value="C:GABA-ergic synapse"/>
    <property type="evidence" value="ECO:0000266"/>
    <property type="project" value="RGD"/>
</dbReference>
<dbReference type="GO" id="GO:0098978">
    <property type="term" value="C:glutamatergic synapse"/>
    <property type="evidence" value="ECO:0000314"/>
    <property type="project" value="SynGO"/>
</dbReference>
<dbReference type="GO" id="GO:0098684">
    <property type="term" value="C:photoreceptor ribbon synapse"/>
    <property type="evidence" value="ECO:0000266"/>
    <property type="project" value="RGD"/>
</dbReference>
<dbReference type="GO" id="GO:0098839">
    <property type="term" value="C:postsynaptic density membrane"/>
    <property type="evidence" value="ECO:0000314"/>
    <property type="project" value="SynGO"/>
</dbReference>
<dbReference type="GO" id="GO:0045211">
    <property type="term" value="C:postsynaptic membrane"/>
    <property type="evidence" value="ECO:0000266"/>
    <property type="project" value="RGD"/>
</dbReference>
<dbReference type="GO" id="GO:0045202">
    <property type="term" value="C:synapse"/>
    <property type="evidence" value="ECO:0000266"/>
    <property type="project" value="RGD"/>
</dbReference>
<dbReference type="GO" id="GO:0043395">
    <property type="term" value="F:heparan sulfate proteoglycan binding"/>
    <property type="evidence" value="ECO:0000266"/>
    <property type="project" value="RGD"/>
</dbReference>
<dbReference type="GO" id="GO:0097113">
    <property type="term" value="P:AMPA glutamate receptor clustering"/>
    <property type="evidence" value="ECO:0000266"/>
    <property type="project" value="RGD"/>
</dbReference>
<dbReference type="GO" id="GO:0072578">
    <property type="term" value="P:neurotransmitter-gated ion channel clustering"/>
    <property type="evidence" value="ECO:0000266"/>
    <property type="project" value="RGD"/>
</dbReference>
<dbReference type="GO" id="GO:0051965">
    <property type="term" value="P:positive regulation of synapse assembly"/>
    <property type="evidence" value="ECO:0000266"/>
    <property type="project" value="RGD"/>
</dbReference>
<dbReference type="GO" id="GO:1901629">
    <property type="term" value="P:regulation of presynaptic membrane organization"/>
    <property type="evidence" value="ECO:0000266"/>
    <property type="project" value="RGD"/>
</dbReference>
<dbReference type="GO" id="GO:0051963">
    <property type="term" value="P:regulation of synapse assembly"/>
    <property type="evidence" value="ECO:0000266"/>
    <property type="project" value="RGD"/>
</dbReference>
<dbReference type="GO" id="GO:0050808">
    <property type="term" value="P:synapse organization"/>
    <property type="evidence" value="ECO:0000314"/>
    <property type="project" value="MGI"/>
</dbReference>
<dbReference type="FunFam" id="3.80.10.10:FF:000005">
    <property type="entry name" value="leucine-rich repeat transmembrane neuronal protein 4"/>
    <property type="match status" value="1"/>
</dbReference>
<dbReference type="Gene3D" id="3.80.10.10">
    <property type="entry name" value="Ribonuclease Inhibitor"/>
    <property type="match status" value="1"/>
</dbReference>
<dbReference type="InterPro" id="IPR001611">
    <property type="entry name" value="Leu-rich_rpt"/>
</dbReference>
<dbReference type="InterPro" id="IPR003591">
    <property type="entry name" value="Leu-rich_rpt_typical-subtyp"/>
</dbReference>
<dbReference type="InterPro" id="IPR032675">
    <property type="entry name" value="LRR_dom_sf"/>
</dbReference>
<dbReference type="InterPro" id="IPR050333">
    <property type="entry name" value="SLRP"/>
</dbReference>
<dbReference type="PANTHER" id="PTHR45712">
    <property type="entry name" value="AGAP008170-PA"/>
    <property type="match status" value="1"/>
</dbReference>
<dbReference type="PANTHER" id="PTHR45712:SF19">
    <property type="entry name" value="LEUCINE-RICH REPEAT TRANSMEMBRANE NEURONAL PROTEIN 2"/>
    <property type="match status" value="1"/>
</dbReference>
<dbReference type="Pfam" id="PF13855">
    <property type="entry name" value="LRR_8"/>
    <property type="match status" value="3"/>
</dbReference>
<dbReference type="PRINTS" id="PR00019">
    <property type="entry name" value="LEURICHRPT"/>
</dbReference>
<dbReference type="SMART" id="SM00369">
    <property type="entry name" value="LRR_TYP"/>
    <property type="match status" value="9"/>
</dbReference>
<dbReference type="SUPFAM" id="SSF52058">
    <property type="entry name" value="L domain-like"/>
    <property type="match status" value="1"/>
</dbReference>
<dbReference type="PROSITE" id="PS51450">
    <property type="entry name" value="LRR"/>
    <property type="match status" value="9"/>
</dbReference>
<name>LRRT4_RAT</name>
<organism>
    <name type="scientific">Rattus norvegicus</name>
    <name type="common">Rat</name>
    <dbReference type="NCBI Taxonomy" id="10116"/>
    <lineage>
        <taxon>Eukaryota</taxon>
        <taxon>Metazoa</taxon>
        <taxon>Chordata</taxon>
        <taxon>Craniata</taxon>
        <taxon>Vertebrata</taxon>
        <taxon>Euteleostomi</taxon>
        <taxon>Mammalia</taxon>
        <taxon>Eutheria</taxon>
        <taxon>Euarchontoglires</taxon>
        <taxon>Glires</taxon>
        <taxon>Rodentia</taxon>
        <taxon>Myomorpha</taxon>
        <taxon>Muroidea</taxon>
        <taxon>Muridae</taxon>
        <taxon>Murinae</taxon>
        <taxon>Rattus</taxon>
    </lineage>
</organism>
<sequence>MGFRLITQLKGMSVLLVLFPTLLLVMLTGAQRACPKNCRCDGKIVYCESHAFADIPENISGGSQGLSLRFNSIQKLKSNQFAGLNQLIWLYLDHNYISSVDEDAFQGIRRLKELILSSNKITYLHNKTFHPVPNLRNLDLSYNKLQTLQSEQFKGLRKLIILHLRSNSLKTVPIRVFQDCRNLDFLDLGYNRLRSLSRNAFAGLLKLKELHLEHNQFSKINFAHFPRLFNLRSIYLQWNRIRSVSQGLTWTWSSLHTLDLSGNDIQAIEPGTFKCLPNLQKLNLDSNKLTNVSQETVNAWISLISITLSGNMWECSRSICPLFYWLKNFKGNKESTMICAGPKHIQGEKVSDAVETYNICSDVQVVNTERSHLAPQTPQKPPFFPKPTIFKSDAIPATLEAVSPSPGFQIPGTDHEYEHVSFHKIIAGSVALFLSVAMILLVIYVSWKRYPASMKQLQQHSLMKRRRKKARESERQMNSPLQEYYVDYKPTNSETMDISVNGSGPCTYTISGSRECEMPHHVKPLPYYSYDQPVIGYCQAHQPLHINKAYEAVSIEQDDSPSLELGRDHSFIATIARSAAPAIYLERITN</sequence>
<keyword id="KW-1003">Cell membrane</keyword>
<keyword id="KW-0325">Glycoprotein</keyword>
<keyword id="KW-0433">Leucine-rich repeat</keyword>
<keyword id="KW-0472">Membrane</keyword>
<keyword id="KW-0628">Postsynaptic cell membrane</keyword>
<keyword id="KW-1185">Reference proteome</keyword>
<keyword id="KW-0677">Repeat</keyword>
<keyword id="KW-0732">Signal</keyword>
<keyword id="KW-0770">Synapse</keyword>
<keyword id="KW-0812">Transmembrane</keyword>
<keyword id="KW-1133">Transmembrane helix</keyword>
<evidence type="ECO:0000250" key="1"/>
<evidence type="ECO:0000255" key="2"/>
<evidence type="ECO:0000269" key="3">
    <source>
    </source>
</evidence>
<evidence type="ECO:0000269" key="4">
    <source>
    </source>
</evidence>
<evidence type="ECO:0000305" key="5"/>
<gene>
    <name type="primary">Lrrtm4</name>
</gene>
<accession>B4F7C5</accession>
<reference key="1">
    <citation type="journal article" date="2004" name="Genome Res.">
        <title>The status, quality, and expansion of the NIH full-length cDNA project: the Mammalian Gene Collection (MGC).</title>
        <authorList>
            <consortium name="The MGC Project Team"/>
        </authorList>
    </citation>
    <scope>NUCLEOTIDE SEQUENCE [LARGE SCALE MRNA]</scope>
    <source>
        <tissue>Brain</tissue>
    </source>
</reference>
<reference key="2">
    <citation type="journal article" date="2009" name="Neuron">
        <title>An unbiased expression screen for synaptogenic proteins identifies the LRRTM protein family as synaptic organizers.</title>
        <authorList>
            <person name="Linhoff M.W."/>
            <person name="Lauren J."/>
            <person name="Cassidy R.M."/>
            <person name="Dobie F.A."/>
            <person name="Takahashi H."/>
            <person name="Nygaard H.B."/>
            <person name="Airaksinen M.S."/>
            <person name="Strittmatter S.M."/>
            <person name="Craig A.M."/>
        </authorList>
    </citation>
    <scope>FUNCTION</scope>
</reference>
<reference key="3">
    <citation type="journal article" date="2012" name="Neuron">
        <title>High-resolution proteomics unravel architecture and molecular diversity of native AMPA receptor complexes.</title>
        <authorList>
            <person name="Schwenk J."/>
            <person name="Harmel N."/>
            <person name="Brechet A."/>
            <person name="Zolles G."/>
            <person name="Berkefeld H."/>
            <person name="Muller C.S."/>
            <person name="Bildl W."/>
            <person name="Baehrens D."/>
            <person name="Huber B."/>
            <person name="Kulik A."/>
            <person name="Klocker N."/>
            <person name="Schulte U."/>
            <person name="Fakler B."/>
        </authorList>
    </citation>
    <scope>IDENTIFICATION IN AMPAR COMPLEX</scope>
    <scope>SUBCELLULAR LOCATION</scope>
    <scope>TISSUE SPECIFICITY</scope>
</reference>
<comment type="function">
    <text evidence="1 3">May play a role in the development and maintenance of the nervous system (By similarity). Exhibits strong synaptogenic activity, restricted to excitatory presynaptic differentiation.</text>
</comment>
<comment type="subunit">
    <text evidence="4">Peripherally associated with AMPAR complex. AMPAR complex consists of an inner core made of 4 pore-forming GluA/GRIA proteins (GRIA1, GRIA2, GRIA3 and GRIA4) and 4 major auxiliary subunits arranged in a twofold symmetry. One of the two pairs of distinct binding sites is occupied either by CNIH2, CNIH3 or CACNG2, CACNG3. The other harbors CACNG2, CACNG3, CACNG4, CACNG8 or GSG1L. This inner core of AMPAR complex is complemented by outer core constituents binding directly to the GluA/GRIA proteins at sites distinct from the interaction sites of the inner core constituents. Outer core constituents include at least PRRT1, PRRT2, CKAMP44/SHISA9, FRRS1L and NRN1. The proteins of the inner and outer core serve as a platform for other, more peripherally associated AMPAR constituents, including LRRTM4. Alone or in combination, these auxiliary subunits control the gating and pharmacology of the AMPAR complex and profoundly impact their biogenesis and protein processing.</text>
</comment>
<comment type="subcellular location">
    <subcellularLocation>
        <location evidence="5">Cell membrane</location>
        <topology evidence="5">Single-pass type I membrane protein</topology>
    </subcellularLocation>
    <subcellularLocation>
        <location evidence="1">Postsynaptic cell membrane</location>
        <topology evidence="1">Single-pass type I membrane protein</topology>
    </subcellularLocation>
</comment>
<comment type="tissue specificity">
    <text evidence="4">Expressed in the brain (at protein level).</text>
</comment>
<comment type="similarity">
    <text evidence="5">Belongs to the LRRTM family.</text>
</comment>
<proteinExistence type="evidence at protein level"/>